<proteinExistence type="inferred from homology"/>
<comment type="catalytic activity">
    <reaction evidence="1">
        <text>D-tagatofuranose 1,6-bisphosphate = D-glyceraldehyde 3-phosphate + dihydroxyacetone phosphate</text>
        <dbReference type="Rhea" id="RHEA:22948"/>
        <dbReference type="ChEBI" id="CHEBI:57642"/>
        <dbReference type="ChEBI" id="CHEBI:58694"/>
        <dbReference type="ChEBI" id="CHEBI:59776"/>
        <dbReference type="EC" id="4.1.2.40"/>
    </reaction>
</comment>
<comment type="pathway">
    <text evidence="1">Carbohydrate metabolism; D-tagatose 6-phosphate degradation; D-glyceraldehyde 3-phosphate and glycerone phosphate from D-tagatose 6-phosphate: step 2/2.</text>
</comment>
<comment type="similarity">
    <text evidence="1">Belongs to the aldolase LacD family.</text>
</comment>
<feature type="chain" id="PRO_1000212740" description="Tagatose 1,6-diphosphate aldolase">
    <location>
        <begin position="1"/>
        <end position="338"/>
    </location>
</feature>
<accession>C1L056</accession>
<gene>
    <name evidence="1" type="primary">lacD</name>
    <name type="ordered locus">Lm4b_00565</name>
</gene>
<organism>
    <name type="scientific">Listeria monocytogenes serotype 4b (strain CLIP80459)</name>
    <dbReference type="NCBI Taxonomy" id="568819"/>
    <lineage>
        <taxon>Bacteria</taxon>
        <taxon>Bacillati</taxon>
        <taxon>Bacillota</taxon>
        <taxon>Bacilli</taxon>
        <taxon>Bacillales</taxon>
        <taxon>Listeriaceae</taxon>
        <taxon>Listeria</taxon>
    </lineage>
</organism>
<dbReference type="EC" id="4.1.2.40" evidence="1"/>
<dbReference type="EMBL" id="FM242711">
    <property type="protein sequence ID" value="CAS04333.1"/>
    <property type="molecule type" value="Genomic_DNA"/>
</dbReference>
<dbReference type="RefSeq" id="WP_003725443.1">
    <property type="nucleotide sequence ID" value="NC_012488.1"/>
</dbReference>
<dbReference type="SMR" id="C1L056"/>
<dbReference type="KEGG" id="lmc:Lm4b_00565"/>
<dbReference type="HOGENOM" id="CLU_058971_0_1_9"/>
<dbReference type="UniPathway" id="UPA00704">
    <property type="reaction ID" value="UER00716"/>
</dbReference>
<dbReference type="GO" id="GO:0061595">
    <property type="term" value="F:6-deoxy-6-sulfofructose-1-phosphate aldolase activity"/>
    <property type="evidence" value="ECO:0007669"/>
    <property type="project" value="TreeGrafter"/>
</dbReference>
<dbReference type="GO" id="GO:0009024">
    <property type="term" value="F:tagatose-6-phosphate kinase activity"/>
    <property type="evidence" value="ECO:0007669"/>
    <property type="project" value="InterPro"/>
</dbReference>
<dbReference type="GO" id="GO:0009025">
    <property type="term" value="F:tagatose-bisphosphate aldolase activity"/>
    <property type="evidence" value="ECO:0007669"/>
    <property type="project" value="UniProtKB-UniRule"/>
</dbReference>
<dbReference type="GO" id="GO:1902777">
    <property type="term" value="P:6-sulfoquinovose(1-) catabolic process"/>
    <property type="evidence" value="ECO:0007669"/>
    <property type="project" value="TreeGrafter"/>
</dbReference>
<dbReference type="GO" id="GO:2001059">
    <property type="term" value="P:D-tagatose 6-phosphate catabolic process"/>
    <property type="evidence" value="ECO:0007669"/>
    <property type="project" value="UniProtKB-UniRule"/>
</dbReference>
<dbReference type="GO" id="GO:0019512">
    <property type="term" value="P:lactose catabolic process via tagatose-6-phosphate"/>
    <property type="evidence" value="ECO:0007669"/>
    <property type="project" value="InterPro"/>
</dbReference>
<dbReference type="FunFam" id="3.20.20.70:FF:000137">
    <property type="entry name" value="Tagatose 1,6-diphosphate aldolase 2"/>
    <property type="match status" value="1"/>
</dbReference>
<dbReference type="Gene3D" id="3.20.20.70">
    <property type="entry name" value="Aldolase class I"/>
    <property type="match status" value="1"/>
</dbReference>
<dbReference type="HAMAP" id="MF_00734">
    <property type="entry name" value="LacD"/>
    <property type="match status" value="1"/>
</dbReference>
<dbReference type="InterPro" id="IPR013785">
    <property type="entry name" value="Aldolase_TIM"/>
</dbReference>
<dbReference type="InterPro" id="IPR002915">
    <property type="entry name" value="DeoC/FbaB/LacD_aldolase"/>
</dbReference>
<dbReference type="InterPro" id="IPR050552">
    <property type="entry name" value="LacD_aldolase"/>
</dbReference>
<dbReference type="InterPro" id="IPR005927">
    <property type="entry name" value="Tag_1.6-dipho_adolase"/>
</dbReference>
<dbReference type="NCBIfam" id="NF009065">
    <property type="entry name" value="PRK12399.1"/>
    <property type="match status" value="1"/>
</dbReference>
<dbReference type="NCBIfam" id="NF009498">
    <property type="entry name" value="PRK12858.1"/>
    <property type="match status" value="1"/>
</dbReference>
<dbReference type="PANTHER" id="PTHR39340">
    <property type="entry name" value="SULFOFRUCTOSEPHOSPHATE ALDOLASE"/>
    <property type="match status" value="1"/>
</dbReference>
<dbReference type="PANTHER" id="PTHR39340:SF1">
    <property type="entry name" value="SULFOFRUCTOSEPHOSPHATE ALDOLASE"/>
    <property type="match status" value="1"/>
</dbReference>
<dbReference type="Pfam" id="PF01791">
    <property type="entry name" value="DeoC"/>
    <property type="match status" value="1"/>
</dbReference>
<dbReference type="SMART" id="SM01133">
    <property type="entry name" value="DeoC"/>
    <property type="match status" value="1"/>
</dbReference>
<dbReference type="SUPFAM" id="SSF51569">
    <property type="entry name" value="Aldolase"/>
    <property type="match status" value="1"/>
</dbReference>
<keyword id="KW-0423">Lactose metabolism</keyword>
<keyword id="KW-0456">Lyase</keyword>
<protein>
    <recommendedName>
        <fullName evidence="1">Tagatose 1,6-diphosphate aldolase</fullName>
        <ecNumber evidence="1">4.1.2.40</ecNumber>
    </recommendedName>
    <alternativeName>
        <fullName evidence="1">D-tagatose-1,6-bisphosphate aldolase</fullName>
    </alternativeName>
    <alternativeName>
        <fullName evidence="1">Tagatose-bisphosphate aldolase</fullName>
    </alternativeName>
</protein>
<evidence type="ECO:0000255" key="1">
    <source>
        <dbReference type="HAMAP-Rule" id="MF_00734"/>
    </source>
</evidence>
<name>LACD_LISMC</name>
<reference key="1">
    <citation type="journal article" date="2012" name="BMC Genomics">
        <title>Comparative genomics and transcriptomics of lineages I, II, and III strains of Listeria monocytogenes.</title>
        <authorList>
            <person name="Hain T."/>
            <person name="Ghai R."/>
            <person name="Billion A."/>
            <person name="Kuenne C.T."/>
            <person name="Steinweg C."/>
            <person name="Izar B."/>
            <person name="Mohamed W."/>
            <person name="Mraheil M."/>
            <person name="Domann E."/>
            <person name="Schaffrath S."/>
            <person name="Karst U."/>
            <person name="Goesmann A."/>
            <person name="Oehm S."/>
            <person name="Puhler A."/>
            <person name="Merkl R."/>
            <person name="Vorwerk S."/>
            <person name="Glaser P."/>
            <person name="Garrido P."/>
            <person name="Rusniok C."/>
            <person name="Buchrieser C."/>
            <person name="Goebel W."/>
            <person name="Chakraborty T."/>
        </authorList>
    </citation>
    <scope>NUCLEOTIDE SEQUENCE [LARGE SCALE GENOMIC DNA]</scope>
    <source>
        <strain>CLIP80459</strain>
    </source>
</reference>
<sequence>MVQITKGKFDGLQRLSNEKGVIAALAIDQRGSLKKMIQQAKGTENKKDVEDFKQLVSEELTPYASAILLDLEYGTPAIKARHEGSGLLTSYEKTGYDATTPGKLPDLIEDLSALRIKENGGDAVKILVYYDPDEPAEINEIKYAFLERIGAECRAVDIPFFLEPITYDATVTDSGSLEYAKLKPAKVKASIKEFSKPRYGVDVLKLEVPVNFKYVEGFAEGEVAYTQDEAARHFEECSDLSPLPFIYLSAGVTSEMFHKTIQFANQHNVQYSGVLCGRATWADGIEVYGKQGDDALREWLRTQGKENITSLDKLLDEGAVPWWTKYGSFEDVHVVEKQ</sequence>